<sequence>MSSLASQLKSISDKSASIALNRQQRSKIHSRSLIFDPKVAASQDYDEIYDVAIDALDELCELDSRFNKFKNSLFANDSINFDRNVQSEDVVTQLDQNINAFFTLLGPYYNFTAALRASEWLVRRFQANMHNLEYMILTALPYYMQPVFIKILNVIPKQNIPQIFEWLVTAKDQLRSPTLQVCFRAFFNDNHLFTFYSSFLDEQIKRNTTYKEQLVFYLSITIQLLPASNKNTLNETLIPVVLRSSDLMLTSKNSSLRLGAYSVLAVLSAVAPLSIELLNTLTFAVLANDIALEAQFAKQTVFLLIQLWTSTTELTTSEALSKTPSLPINIIEHIDISQAKKDKFLAIYFSSIFPSETSLQLLNMIELKGNKRMFKFVVHTVLSSLKPQHLNGGVTSNNNSTNYKDTILDIVRKLIKLDQATFDEMLKSFRLTVSELELTLEGSLLATHSGDEKLDEFGDNVDRDDDTEYTKFVDERQDDKEDGDENTKFDISKLGASAPTYLDSKYNPEFYKLSFAFTRFCSKVDIKSQRAAILHFTHKVFQNPALSITFFVKSGIIFGCSIYMVKNTADGKTDFYLVLPLLLIAFNDPSSHIRAAFAQLVQLVSEITKAIHENKKKQKTLLFFESEVYANSAEKKMISPQDAIKLFAFIGSLDGMRLEEGKIATLLKSIFNGKFDKKTLGSLYQTFILNQWAQPSLPIVIKQRVWSISSQLNEMGVNGVRTYFWDTDIKPYLAKREEWLVQAKEAKLADYYNIVEKSLVQLVGGDHLSAEDSNSVSHWLCQALDSNTSLQLVANERITSIFPKLTSVESKVIILSKLVDLLVSDDYVEFDPMITLQSLPLDSAVFLQILENVKIGDQMPEQGVVKRRRRSSSSTKQAMAKSDMTNLASQHLRKLSIILEVLEVNLRKASIANPKLLKVLFKILSDLDYLGNDGNLPILYAQEVLASCLLLSISELKNSNHKHQLDSNSVRADLIVNSLRNSSSPQVQNRLLLVISELATLAPEIILHSVMPIFTFMGAHTIRQDDEFSNDALQKTVARVIPALASTNSGSFTTEIEFLLASFTAAFKHIPSHRRVRLFVALTKTLKPSNSMHILIYLLGEQYYQAKMQKNALEMRDIETFVTAYLKAFAVETQLNGLDQFSNLLNELPRHQLEENSKIYDQLRSRPIFGLAVVNSTTEELLKKRHALLEYLNSVLELDSANFDVTSLKSRIDIALKESSENDTLVLPQIRHMTSFALSELDIYTNTEPHPEISAELFVMLTSLVDLLPVVKFVESITEFLDVDKLGDNTAIKVGRNYAVLAARKFENEISLTLESVVENFSDLDKLFIVLLKGIERNVDLELQQAYLNLFAVITSKLGVDAGLTAKFSSVLIKSLGVITTSSGLLSSESEIVIASISAIVSIVNVLGIKTLGLFPKIIPPTLKIWEQTTTTTTATTTRSISATKIGRDEQNESSKLVQESVLLLLSCYIKKMPSFMVTTLDSVILTILNSDLTESQIKSSIMNLIIDRVNIGQVFKSLCSVWTQRQFYQSKNPASLGLYLNSMESTINKLEKREAISEATVFMKWLIQAFEFRDYSEKLGPPIRYQHYSSYGKFFPFVCYCLCHETQRMESSFHSCAIAYVMKLNDKSFRPLFANLVRWAIDGDNSIHDVAKTSRLLSFYRFFNKLQELLKSIVTSYYSYLVDATSECLKSFASEEDKGNKDATTLRRIVLISLSLSFTFDQDEYWSQQGRFDSICQPLLDQLSNIEESIGKFLVKTITNFVSDISSKEHSEVVLKGLVKFISYDTENLSNTKIWTIRTLKSIFQKMGEQWLSYLPILVPHIAELLEDDDEAVEIEVREGLVRVIEKVLGEPLDRYLS</sequence>
<proteinExistence type="inferred from homology"/>
<comment type="function">
    <text evidence="1">Involved in nucleolar processing of pre-18S ribosomal RNA. Involved in ribosome biosynthesis (By similarity).</text>
</comment>
<comment type="subunit">
    <text evidence="1">Component of the ribosomal small subunit (SSU) processome.</text>
</comment>
<comment type="subcellular location">
    <subcellularLocation>
        <location evidence="1 2">Nucleus</location>
        <location evidence="1 2">Nucleolus</location>
    </subcellularLocation>
    <subcellularLocation>
        <location evidence="2">Membrane</location>
        <topology evidence="2">Multi-pass membrane protein</topology>
    </subcellularLocation>
</comment>
<comment type="similarity">
    <text evidence="3">Belongs to the HEATR1/UTP10 family.</text>
</comment>
<comment type="sequence caution" evidence="3">
    <conflict type="erroneous gene model prediction">
        <sequence resource="EMBL-CDS" id="EDK45469"/>
    </conflict>
</comment>
<comment type="sequence caution" evidence="3">
    <conflict type="erroneous gene model prediction">
        <sequence resource="EMBL-CDS" id="EDK45470"/>
    </conflict>
</comment>
<comment type="sequence caution" evidence="3">
    <conflict type="erroneous gene model prediction">
        <sequence resource="EMBL-CDS" id="EDK45471"/>
    </conflict>
</comment>
<gene>
    <name evidence="1" type="primary">UTP10</name>
    <name type="ORF">LELG_03648/LELG_03649/LELG_03650</name>
</gene>
<evidence type="ECO:0000250" key="1">
    <source>
        <dbReference type="UniProtKB" id="P42945"/>
    </source>
</evidence>
<evidence type="ECO:0000255" key="2"/>
<evidence type="ECO:0000305" key="3"/>
<feature type="chain" id="PRO_0000308506" description="U3 small nucleolar RNA-associated protein 10">
    <location>
        <begin position="1"/>
        <end position="1859"/>
    </location>
</feature>
<feature type="transmembrane region" description="Helical" evidence="2">
    <location>
        <begin position="258"/>
        <end position="278"/>
    </location>
</feature>
<feature type="transmembrane region" description="Helical" evidence="2">
    <location>
        <begin position="1392"/>
        <end position="1412"/>
    </location>
</feature>
<feature type="repeat" description="HEAT 1" evidence="2">
    <location>
        <begin position="578"/>
        <end position="616"/>
    </location>
</feature>
<feature type="repeat" description="HEAT 2" evidence="2">
    <location>
        <begin position="1819"/>
        <end position="1857"/>
    </location>
</feature>
<name>UTP10_LODEL</name>
<organism>
    <name type="scientific">Lodderomyces elongisporus (strain ATCC 11503 / CBS 2605 / JCM 1781 / NBRC 1676 / NRRL YB-4239)</name>
    <name type="common">Yeast</name>
    <name type="synonym">Saccharomyces elongisporus</name>
    <dbReference type="NCBI Taxonomy" id="379508"/>
    <lineage>
        <taxon>Eukaryota</taxon>
        <taxon>Fungi</taxon>
        <taxon>Dikarya</taxon>
        <taxon>Ascomycota</taxon>
        <taxon>Saccharomycotina</taxon>
        <taxon>Pichiomycetes</taxon>
        <taxon>Debaryomycetaceae</taxon>
        <taxon>Candida/Lodderomyces clade</taxon>
        <taxon>Lodderomyces</taxon>
    </lineage>
</organism>
<reference key="1">
    <citation type="journal article" date="2009" name="Nature">
        <title>Evolution of pathogenicity and sexual reproduction in eight Candida genomes.</title>
        <authorList>
            <person name="Butler G."/>
            <person name="Rasmussen M.D."/>
            <person name="Lin M.F."/>
            <person name="Santos M.A.S."/>
            <person name="Sakthikumar S."/>
            <person name="Munro C.A."/>
            <person name="Rheinbay E."/>
            <person name="Grabherr M."/>
            <person name="Forche A."/>
            <person name="Reedy J.L."/>
            <person name="Agrafioti I."/>
            <person name="Arnaud M.B."/>
            <person name="Bates S."/>
            <person name="Brown A.J.P."/>
            <person name="Brunke S."/>
            <person name="Costanzo M.C."/>
            <person name="Fitzpatrick D.A."/>
            <person name="de Groot P.W.J."/>
            <person name="Harris D."/>
            <person name="Hoyer L.L."/>
            <person name="Hube B."/>
            <person name="Klis F.M."/>
            <person name="Kodira C."/>
            <person name="Lennard N."/>
            <person name="Logue M.E."/>
            <person name="Martin R."/>
            <person name="Neiman A.M."/>
            <person name="Nikolaou E."/>
            <person name="Quail M.A."/>
            <person name="Quinn J."/>
            <person name="Santos M.C."/>
            <person name="Schmitzberger F.F."/>
            <person name="Sherlock G."/>
            <person name="Shah P."/>
            <person name="Silverstein K.A.T."/>
            <person name="Skrzypek M.S."/>
            <person name="Soll D."/>
            <person name="Staggs R."/>
            <person name="Stansfield I."/>
            <person name="Stumpf M.P.H."/>
            <person name="Sudbery P.E."/>
            <person name="Srikantha T."/>
            <person name="Zeng Q."/>
            <person name="Berman J."/>
            <person name="Berriman M."/>
            <person name="Heitman J."/>
            <person name="Gow N.A.R."/>
            <person name="Lorenz M.C."/>
            <person name="Birren B.W."/>
            <person name="Kellis M."/>
            <person name="Cuomo C.A."/>
        </authorList>
    </citation>
    <scope>NUCLEOTIDE SEQUENCE [LARGE SCALE GENOMIC DNA]</scope>
    <source>
        <strain>ATCC 11503 / BCRC 21390 / CBS 2605 / JCM 1781 / NBRC 1676 / NRRL YB-4239</strain>
    </source>
</reference>
<keyword id="KW-0472">Membrane</keyword>
<keyword id="KW-0539">Nucleus</keyword>
<keyword id="KW-1185">Reference proteome</keyword>
<keyword id="KW-0677">Repeat</keyword>
<keyword id="KW-0687">Ribonucleoprotein</keyword>
<keyword id="KW-0690">Ribosome biogenesis</keyword>
<keyword id="KW-0698">rRNA processing</keyword>
<keyword id="KW-0812">Transmembrane</keyword>
<keyword id="KW-1133">Transmembrane helix</keyword>
<accession>A5E212</accession>
<accession>A5E211</accession>
<accession>A5E213</accession>
<protein>
    <recommendedName>
        <fullName>U3 small nucleolar RNA-associated protein 10</fullName>
    </recommendedName>
</protein>
<dbReference type="EMBL" id="CH981527">
    <property type="protein sequence ID" value="EDK45469.1"/>
    <property type="status" value="ALT_SEQ"/>
    <property type="molecule type" value="Genomic_DNA"/>
</dbReference>
<dbReference type="EMBL" id="CH981527">
    <property type="protein sequence ID" value="EDK45470.1"/>
    <property type="status" value="ALT_SEQ"/>
    <property type="molecule type" value="Genomic_DNA"/>
</dbReference>
<dbReference type="EMBL" id="CH981527">
    <property type="protein sequence ID" value="EDK45471.1"/>
    <property type="status" value="ALT_SEQ"/>
    <property type="molecule type" value="Genomic_DNA"/>
</dbReference>
<dbReference type="RefSeq" id="XP_001525720.1">
    <property type="nucleotide sequence ID" value="XM_001525670.1"/>
</dbReference>
<dbReference type="RefSeq" id="XP_001525721.1">
    <property type="nucleotide sequence ID" value="XM_001525671.1"/>
</dbReference>
<dbReference type="RefSeq" id="XP_001525722.1">
    <property type="nucleotide sequence ID" value="XM_001525672.1"/>
</dbReference>
<dbReference type="SMR" id="A5E212"/>
<dbReference type="FunCoup" id="A5E212">
    <property type="interactions" value="1099"/>
</dbReference>
<dbReference type="STRING" id="379508.A5E212"/>
<dbReference type="GeneID" id="5232863"/>
<dbReference type="KEGG" id="lel:PVL30_003129"/>
<dbReference type="eggNOG" id="KOG1837">
    <property type="taxonomic scope" value="Eukaryota"/>
</dbReference>
<dbReference type="HOGENOM" id="CLU_1111577_0_0_1"/>
<dbReference type="InParanoid" id="A5E212"/>
<dbReference type="OrthoDB" id="31183at2759"/>
<dbReference type="Proteomes" id="UP000001996">
    <property type="component" value="Unassembled WGS sequence"/>
</dbReference>
<dbReference type="GO" id="GO:0030686">
    <property type="term" value="C:90S preribosome"/>
    <property type="evidence" value="ECO:0007669"/>
    <property type="project" value="TreeGrafter"/>
</dbReference>
<dbReference type="GO" id="GO:0016020">
    <property type="term" value="C:membrane"/>
    <property type="evidence" value="ECO:0007669"/>
    <property type="project" value="UniProtKB-SubCell"/>
</dbReference>
<dbReference type="GO" id="GO:0032040">
    <property type="term" value="C:small-subunit processome"/>
    <property type="evidence" value="ECO:0007669"/>
    <property type="project" value="TreeGrafter"/>
</dbReference>
<dbReference type="GO" id="GO:0034455">
    <property type="term" value="C:t-UTP complex"/>
    <property type="evidence" value="ECO:0007669"/>
    <property type="project" value="TreeGrafter"/>
</dbReference>
<dbReference type="GO" id="GO:0030515">
    <property type="term" value="F:snoRNA binding"/>
    <property type="evidence" value="ECO:0007669"/>
    <property type="project" value="TreeGrafter"/>
</dbReference>
<dbReference type="GO" id="GO:0000462">
    <property type="term" value="P:maturation of SSU-rRNA from tricistronic rRNA transcript (SSU-rRNA, 5.8S rRNA, LSU-rRNA)"/>
    <property type="evidence" value="ECO:0007669"/>
    <property type="project" value="TreeGrafter"/>
</dbReference>
<dbReference type="GO" id="GO:0045943">
    <property type="term" value="P:positive regulation of transcription by RNA polymerase I"/>
    <property type="evidence" value="ECO:0007669"/>
    <property type="project" value="TreeGrafter"/>
</dbReference>
<dbReference type="Gene3D" id="1.25.10.10">
    <property type="entry name" value="Leucine-rich Repeat Variant"/>
    <property type="match status" value="1"/>
</dbReference>
<dbReference type="InterPro" id="IPR011989">
    <property type="entry name" value="ARM-like"/>
</dbReference>
<dbReference type="InterPro" id="IPR016024">
    <property type="entry name" value="ARM-type_fold"/>
</dbReference>
<dbReference type="InterPro" id="IPR012954">
    <property type="entry name" value="BP28_C_dom"/>
</dbReference>
<dbReference type="InterPro" id="IPR021133">
    <property type="entry name" value="HEAT_type_2"/>
</dbReference>
<dbReference type="InterPro" id="IPR056473">
    <property type="entry name" value="HEAT_Utp10/HEAT1"/>
</dbReference>
<dbReference type="InterPro" id="IPR022125">
    <property type="entry name" value="U3snoRNP10_N"/>
</dbReference>
<dbReference type="InterPro" id="IPR040191">
    <property type="entry name" value="UTP10"/>
</dbReference>
<dbReference type="PANTHER" id="PTHR13457">
    <property type="entry name" value="BAP28"/>
    <property type="match status" value="1"/>
</dbReference>
<dbReference type="PANTHER" id="PTHR13457:SF1">
    <property type="entry name" value="HEAT REPEAT-CONTAINING PROTEIN 1"/>
    <property type="match status" value="1"/>
</dbReference>
<dbReference type="Pfam" id="PF08146">
    <property type="entry name" value="BP28CT"/>
    <property type="match status" value="1"/>
</dbReference>
<dbReference type="Pfam" id="PF23243">
    <property type="entry name" value="HEAT_HEATR1"/>
    <property type="match status" value="1"/>
</dbReference>
<dbReference type="Pfam" id="PF12397">
    <property type="entry name" value="U3snoRNP10"/>
    <property type="match status" value="1"/>
</dbReference>
<dbReference type="SMART" id="SM01036">
    <property type="entry name" value="BP28CT"/>
    <property type="match status" value="1"/>
</dbReference>
<dbReference type="SUPFAM" id="SSF48371">
    <property type="entry name" value="ARM repeat"/>
    <property type="match status" value="2"/>
</dbReference>
<dbReference type="PROSITE" id="PS50077">
    <property type="entry name" value="HEAT_REPEAT"/>
    <property type="match status" value="1"/>
</dbReference>